<name>APOE_PAPHA</name>
<keyword id="KW-0162">Chylomicron</keyword>
<keyword id="KW-0967">Endosome</keyword>
<keyword id="KW-0272">Extracellular matrix</keyword>
<keyword id="KW-0325">Glycoprotein</keyword>
<keyword id="KW-0345">HDL</keyword>
<keyword id="KW-0358">Heparin-binding</keyword>
<keyword id="KW-0445">Lipid transport</keyword>
<keyword id="KW-0446">Lipid-binding</keyword>
<keyword id="KW-0558">Oxidation</keyword>
<keyword id="KW-0597">Phosphoprotein</keyword>
<keyword id="KW-0677">Repeat</keyword>
<keyword id="KW-0964">Secreted</keyword>
<keyword id="KW-0732">Signal</keyword>
<keyword id="KW-0813">Transport</keyword>
<keyword id="KW-0850">VLDL</keyword>
<feature type="signal peptide" evidence="4">
    <location>
        <begin position="1"/>
        <end position="18"/>
    </location>
</feature>
<feature type="chain" id="PRO_0000421380" description="Apolipoprotein E">
    <location>
        <begin position="19"/>
        <end position="317"/>
    </location>
</feature>
<feature type="repeat" description="1">
    <location>
        <begin position="80"/>
        <end position="101"/>
    </location>
</feature>
<feature type="repeat" description="2">
    <location>
        <begin position="102"/>
        <end position="123"/>
    </location>
</feature>
<feature type="repeat" description="3">
    <location>
        <begin position="124"/>
        <end position="145"/>
    </location>
</feature>
<feature type="repeat" description="4">
    <location>
        <begin position="146"/>
        <end position="167"/>
    </location>
</feature>
<feature type="repeat" description="5">
    <location>
        <begin position="168"/>
        <end position="189"/>
    </location>
</feature>
<feature type="repeat" description="6">
    <location>
        <begin position="190"/>
        <end position="211"/>
    </location>
</feature>
<feature type="repeat" description="7">
    <location>
        <begin position="212"/>
        <end position="233"/>
    </location>
</feature>
<feature type="repeat" description="8">
    <location>
        <begin position="234"/>
        <end position="255"/>
    </location>
</feature>
<feature type="region of interest" description="8 X 22 AA approximate tandem repeats">
    <location>
        <begin position="80"/>
        <end position="255"/>
    </location>
</feature>
<feature type="region of interest" description="LDL and other lipoprotein receptors binding" evidence="1">
    <location>
        <begin position="158"/>
        <end position="168"/>
    </location>
</feature>
<feature type="region of interest" description="Lipid-binding and lipoprotein association" evidence="1">
    <location>
        <begin position="210"/>
        <end position="290"/>
    </location>
</feature>
<feature type="region of interest" description="Homooligomerization" evidence="1">
    <location>
        <begin position="266"/>
        <end position="317"/>
    </location>
</feature>
<feature type="region of interest" description="Specificity for association with VLDL" evidence="1">
    <location>
        <begin position="278"/>
        <end position="290"/>
    </location>
</feature>
<feature type="binding site" evidence="1">
    <location>
        <begin position="162"/>
        <end position="165"/>
    </location>
    <ligand>
        <name>heparin</name>
        <dbReference type="ChEBI" id="CHEBI:28304"/>
    </ligand>
</feature>
<feature type="binding site" evidence="1">
    <location>
        <begin position="229"/>
        <end position="236"/>
    </location>
    <ligand>
        <name>heparin</name>
        <dbReference type="ChEBI" id="CHEBI:28304"/>
    </ligand>
</feature>
<feature type="modified residue" description="Methionine sulfoxide" evidence="2">
    <location>
        <position position="143"/>
    </location>
</feature>
<feature type="modified residue" description="Phosphoserine" evidence="1">
    <location>
        <position position="147"/>
    </location>
</feature>
<feature type="glycosylation site" description="O-linked (GalNAc...) threonine" evidence="3">
    <location>
        <position position="212"/>
    </location>
</feature>
<comment type="function">
    <text evidence="1">APOE is an apolipoprotein, a protein associating with lipid particles, that mainly functions in lipoprotein-mediated lipid transport between organs via the plasma and interstitial fluids. APOE is a core component of plasma lipoproteins and is involved in their production, conversion and clearance. Apolipoproteins are amphipathic molecules that interact both with lipids of the lipoprotein particle core and the aqueous environment of the plasma. As such, APOE associates with chylomicrons, chylomicron remnants, very low density lipoproteins (VLDL) and intermediate density lipoproteins (IDL) but shows a preferential binding to high-density lipoproteins (HDL). It also binds a wide range of cellular receptors including the LDL receptor/LDLR, the LDL receptor-related proteins LRP1, LRP2 and LRP8 and the very low-density lipoprotein receptor/VLDLR that mediate the cellular uptake of the APOE-containing lipoprotein particles. Finally, APOE also has a heparin-binding activity and binds heparan-sulfate proteoglycans on the surface of cells, a property that supports the capture and the receptor-mediated uptake of APOE-containing lipoproteins by cells. A main function of APOE is to mediate lipoprotein clearance through the uptake of chylomicrons, VLDLs, and HDLs by hepatocytes. APOE is also involved in the biosynthesis by the liver of VLDLs as well as their uptake by peripheral tissues ensuring the delivery of triglycerides and energy storage in muscle, heart and adipose tissues. By participating in the lipoprotein-mediated distribution of lipids among tissues, APOE plays a critical role in plasma and tissues lipid homeostasis. APOE is also involved in two steps of reverse cholesterol transport, the HDLs-mediated transport of cholesterol from peripheral tissues to the liver, and thereby plays an important role in cholesterol homeostasis. First, it is functionally associated with ABCA1 in the biogenesis of HDLs in tissues. Second, it is enriched in circulating HDLs and mediates their uptake by hepatocytes. APOE also plays an important role in lipid transport in the central nervous system, regulating neuron survival and sprouting.</text>
</comment>
<comment type="subunit">
    <text evidence="1">Homotetramer. May interact with ABCA1; functionally associated with ABCA1 in the biogenesis of HDLs. May interact with APP/A4 amyloid-beta peptide; the interaction is extremely stable in vitro but its physiological significance is unclear. May interact with MAPT. May interact with MAP2. In the cerebrospinal fluid, interacts with secreted SORL1. Interacts with PMEL; this allows the loading of PMEL luminal fragment on ILVs to induce fibril nucleation.</text>
</comment>
<comment type="subcellular location">
    <subcellularLocation>
        <location evidence="1">Secreted</location>
    </subcellularLocation>
    <subcellularLocation>
        <location evidence="1">Secreted</location>
        <location evidence="1">Extracellular space</location>
    </subcellularLocation>
    <subcellularLocation>
        <location evidence="1">Secreted</location>
        <location evidence="1">Extracellular space</location>
        <location evidence="1">Extracellular matrix</location>
    </subcellularLocation>
    <subcellularLocation>
        <location evidence="1">Extracellular vesicle</location>
    </subcellularLocation>
    <subcellularLocation>
        <location evidence="1">Endosome</location>
        <location evidence="1">Multivesicular body</location>
    </subcellularLocation>
    <text evidence="1">In the plasma, APOE is associated with chylomicrons, chylomicrons remnants, VLDL, LDL and HDL lipoproteins. Lipid poor oligomeric APOE is associated with the extracellular matrix in a calcium- and heparan-sulfate proteoglycans-dependent manner. Lipidation induces the release from the extracellular matrix. Colocalizes with CD63 and PMEL at exosomes and in intraluminal vesicles within multivesicular endosomes.</text>
</comment>
<comment type="PTM">
    <text evidence="1">APOE exists as multiple glycosylated and sialylated glycoforms within cells and in plasma. The extent of glycosylation and sialylation are tissue and context specific.</text>
</comment>
<comment type="PTM">
    <text evidence="1">Glycated in plasma VLDL.</text>
</comment>
<comment type="PTM">
    <text evidence="1">Phosphorylated by FAM20C in the extracellular medium.</text>
</comment>
<comment type="similarity">
    <text evidence="5">Belongs to the apolipoprotein A1/A4/E family.</text>
</comment>
<gene>
    <name type="primary">APOE</name>
</gene>
<reference key="1">
    <citation type="submission" date="2003-07" db="EMBL/GenBank/DDBJ databases">
        <authorList>
            <person name="Cheng J.-F."/>
            <person name="Hamilton M."/>
            <person name="Peng Y."/>
            <person name="Hosseini R."/>
            <person name="Peng Z."/>
            <person name="Malinov I."/>
            <person name="Rubin E.M."/>
        </authorList>
    </citation>
    <scope>NUCLEOTIDE SEQUENCE [LARGE SCALE GENOMIC DNA]</scope>
</reference>
<reference key="2">
    <citation type="unpublished observations" date="2012-12">
        <authorList>
            <person name="Puppione D.L."/>
        </authorList>
    </citation>
    <scope>IDENTIFICATION</scope>
</reference>
<dbReference type="EMBL" id="AC145523">
    <property type="status" value="NOT_ANNOTATED_CDS"/>
    <property type="molecule type" value="Genomic_DNA"/>
</dbReference>
<dbReference type="SMR" id="P0DKY2"/>
<dbReference type="GlyCosmos" id="P0DKY2">
    <property type="glycosylation" value="1 site, No reported glycans"/>
</dbReference>
<dbReference type="GO" id="GO:0042627">
    <property type="term" value="C:chylomicron"/>
    <property type="evidence" value="ECO:0007669"/>
    <property type="project" value="UniProtKB-KW"/>
</dbReference>
<dbReference type="GO" id="GO:0070062">
    <property type="term" value="C:extracellular exosome"/>
    <property type="evidence" value="ECO:0000250"/>
    <property type="project" value="UniProtKB"/>
</dbReference>
<dbReference type="GO" id="GO:0031012">
    <property type="term" value="C:extracellular matrix"/>
    <property type="evidence" value="ECO:0000250"/>
    <property type="project" value="UniProtKB"/>
</dbReference>
<dbReference type="GO" id="GO:0005615">
    <property type="term" value="C:extracellular space"/>
    <property type="evidence" value="ECO:0000250"/>
    <property type="project" value="UniProtKB"/>
</dbReference>
<dbReference type="GO" id="GO:0034364">
    <property type="term" value="C:high-density lipoprotein particle"/>
    <property type="evidence" value="ECO:0000250"/>
    <property type="project" value="UniProtKB"/>
</dbReference>
<dbReference type="GO" id="GO:0034363">
    <property type="term" value="C:intermediate-density lipoprotein particle"/>
    <property type="evidence" value="ECO:0000250"/>
    <property type="project" value="UniProtKB"/>
</dbReference>
<dbReference type="GO" id="GO:0034362">
    <property type="term" value="C:low-density lipoprotein particle"/>
    <property type="evidence" value="ECO:0000250"/>
    <property type="project" value="UniProtKB"/>
</dbReference>
<dbReference type="GO" id="GO:0097487">
    <property type="term" value="C:multivesicular body, internal vesicle"/>
    <property type="evidence" value="ECO:0000250"/>
    <property type="project" value="UniProtKB"/>
</dbReference>
<dbReference type="GO" id="GO:0034361">
    <property type="term" value="C:very-low-density lipoprotein particle"/>
    <property type="evidence" value="ECO:0000250"/>
    <property type="project" value="UniProtKB"/>
</dbReference>
<dbReference type="GO" id="GO:0120020">
    <property type="term" value="F:cholesterol transfer activity"/>
    <property type="evidence" value="ECO:0007669"/>
    <property type="project" value="TreeGrafter"/>
</dbReference>
<dbReference type="GO" id="GO:0043395">
    <property type="term" value="F:heparan sulfate proteoglycan binding"/>
    <property type="evidence" value="ECO:0000250"/>
    <property type="project" value="UniProtKB"/>
</dbReference>
<dbReference type="GO" id="GO:0008201">
    <property type="term" value="F:heparin binding"/>
    <property type="evidence" value="ECO:0000250"/>
    <property type="project" value="UniProtKB"/>
</dbReference>
<dbReference type="GO" id="GO:0042802">
    <property type="term" value="F:identical protein binding"/>
    <property type="evidence" value="ECO:0000250"/>
    <property type="project" value="UniProtKB"/>
</dbReference>
<dbReference type="GO" id="GO:0050750">
    <property type="term" value="F:low-density lipoprotein particle receptor binding"/>
    <property type="evidence" value="ECO:0000250"/>
    <property type="project" value="UniProtKB"/>
</dbReference>
<dbReference type="GO" id="GO:0060228">
    <property type="term" value="F:phosphatidylcholine-sterol O-acyltransferase activator activity"/>
    <property type="evidence" value="ECO:0007669"/>
    <property type="project" value="TreeGrafter"/>
</dbReference>
<dbReference type="GO" id="GO:0005543">
    <property type="term" value="F:phospholipid binding"/>
    <property type="evidence" value="ECO:0007669"/>
    <property type="project" value="TreeGrafter"/>
</dbReference>
<dbReference type="GO" id="GO:0055090">
    <property type="term" value="P:acylglycerol homeostasis"/>
    <property type="evidence" value="ECO:0007669"/>
    <property type="project" value="TreeGrafter"/>
</dbReference>
<dbReference type="GO" id="GO:0033344">
    <property type="term" value="P:cholesterol efflux"/>
    <property type="evidence" value="ECO:0000250"/>
    <property type="project" value="UniProtKB"/>
</dbReference>
<dbReference type="GO" id="GO:0008203">
    <property type="term" value="P:cholesterol metabolic process"/>
    <property type="evidence" value="ECO:0007669"/>
    <property type="project" value="TreeGrafter"/>
</dbReference>
<dbReference type="GO" id="GO:0034382">
    <property type="term" value="P:chylomicron remnant clearance"/>
    <property type="evidence" value="ECO:0000250"/>
    <property type="project" value="UniProtKB"/>
</dbReference>
<dbReference type="GO" id="GO:0034380">
    <property type="term" value="P:high-density lipoprotein particle assembly"/>
    <property type="evidence" value="ECO:0000250"/>
    <property type="project" value="UniProtKB"/>
</dbReference>
<dbReference type="GO" id="GO:0071831">
    <property type="term" value="P:intermediate-density lipoprotein particle clearance"/>
    <property type="evidence" value="ECO:0000250"/>
    <property type="project" value="UniProtKB"/>
</dbReference>
<dbReference type="GO" id="GO:0042158">
    <property type="term" value="P:lipoprotein biosynthetic process"/>
    <property type="evidence" value="ECO:0000250"/>
    <property type="project" value="UniProtKB"/>
</dbReference>
<dbReference type="GO" id="GO:0032438">
    <property type="term" value="P:melanosome organization"/>
    <property type="evidence" value="ECO:0000250"/>
    <property type="project" value="UniProtKB"/>
</dbReference>
<dbReference type="GO" id="GO:1905907">
    <property type="term" value="P:negative regulation of amyloid fibril formation"/>
    <property type="evidence" value="ECO:0000250"/>
    <property type="project" value="UniProtKB"/>
</dbReference>
<dbReference type="GO" id="GO:0031175">
    <property type="term" value="P:neuron projection development"/>
    <property type="evidence" value="ECO:0000250"/>
    <property type="project" value="UniProtKB"/>
</dbReference>
<dbReference type="GO" id="GO:0033700">
    <property type="term" value="P:phospholipid efflux"/>
    <property type="evidence" value="ECO:0007669"/>
    <property type="project" value="TreeGrafter"/>
</dbReference>
<dbReference type="GO" id="GO:1900223">
    <property type="term" value="P:positive regulation of amyloid-beta clearance"/>
    <property type="evidence" value="ECO:0000250"/>
    <property type="project" value="UniProtKB"/>
</dbReference>
<dbReference type="GO" id="GO:0071830">
    <property type="term" value="P:triglyceride-rich lipoprotein particle clearance"/>
    <property type="evidence" value="ECO:0000250"/>
    <property type="project" value="UniProtKB"/>
</dbReference>
<dbReference type="GO" id="GO:0034447">
    <property type="term" value="P:very-low-density lipoprotein particle clearance"/>
    <property type="evidence" value="ECO:0000250"/>
    <property type="project" value="UniProtKB"/>
</dbReference>
<dbReference type="FunFam" id="1.20.120.20:FF:000002">
    <property type="entry name" value="Apolipoprotein E"/>
    <property type="match status" value="1"/>
</dbReference>
<dbReference type="FunFam" id="1.20.120.20:FF:000003">
    <property type="entry name" value="Apolipoprotein E"/>
    <property type="match status" value="1"/>
</dbReference>
<dbReference type="Gene3D" id="1.20.120.20">
    <property type="entry name" value="Apolipoprotein"/>
    <property type="match status" value="2"/>
</dbReference>
<dbReference type="InterPro" id="IPR000074">
    <property type="entry name" value="ApoA_E"/>
</dbReference>
<dbReference type="InterPro" id="IPR050163">
    <property type="entry name" value="Apolipoprotein_A1/A4/E"/>
</dbReference>
<dbReference type="PANTHER" id="PTHR18976">
    <property type="entry name" value="APOLIPOPROTEIN"/>
    <property type="match status" value="1"/>
</dbReference>
<dbReference type="PANTHER" id="PTHR18976:SF2">
    <property type="entry name" value="APOLIPOPROTEIN E"/>
    <property type="match status" value="1"/>
</dbReference>
<dbReference type="Pfam" id="PF01442">
    <property type="entry name" value="Apolipoprotein"/>
    <property type="match status" value="1"/>
</dbReference>
<dbReference type="SUPFAM" id="SSF58113">
    <property type="entry name" value="Apolipoprotein A-I"/>
    <property type="match status" value="1"/>
</dbReference>
<proteinExistence type="inferred from homology"/>
<organism>
    <name type="scientific">Papio hamadryas</name>
    <name type="common">Hamadryas baboon</name>
    <dbReference type="NCBI Taxonomy" id="9557"/>
    <lineage>
        <taxon>Eukaryota</taxon>
        <taxon>Metazoa</taxon>
        <taxon>Chordata</taxon>
        <taxon>Craniata</taxon>
        <taxon>Vertebrata</taxon>
        <taxon>Euteleostomi</taxon>
        <taxon>Mammalia</taxon>
        <taxon>Eutheria</taxon>
        <taxon>Euarchontoglires</taxon>
        <taxon>Primates</taxon>
        <taxon>Haplorrhini</taxon>
        <taxon>Catarrhini</taxon>
        <taxon>Cercopithecidae</taxon>
        <taxon>Cercopithecinae</taxon>
        <taxon>Papio</taxon>
    </lineage>
</organism>
<protein>
    <recommendedName>
        <fullName>Apolipoprotein E</fullName>
        <shortName>Apo-E</shortName>
    </recommendedName>
</protein>
<accession>P0DKY2</accession>
<evidence type="ECO:0000250" key="1">
    <source>
        <dbReference type="UniProtKB" id="P02649"/>
    </source>
</evidence>
<evidence type="ECO:0000250" key="2">
    <source>
        <dbReference type="UniProtKB" id="P08226"/>
    </source>
</evidence>
<evidence type="ECO:0000250" key="3">
    <source>
        <dbReference type="UniProtKB" id="Q03247"/>
    </source>
</evidence>
<evidence type="ECO:0000255" key="4"/>
<evidence type="ECO:0000305" key="5"/>
<sequence>MKVLWAALLVTFLAGCQAKVEQPVEPETEPELRQQAEWQSGQPWELALGRFWDYLRWVQTLSEQVQEELLSPQVTQELTTLMDETMKELKAYKSELEEQLSPVAEETRARLSKELQAAQARLGADMEDVRSRLVQYRSEVQAMLGQSTEELRARLASHLRKLRKRLLRDADDLQKRLAVYQAGAREGAERGVSAIRERLGPLVEQGRVRAATVGSLASQPLQERAQALGERLRARMEEMGSRTRDRLDEVKEQVAEVRAKLEEQAQQISLQAEAFQARLKSWFEPLVEDMQRQWAGLVEKVQAAVGASTAPVPSDNH</sequence>